<protein>
    <recommendedName>
        <fullName evidence="1">High frequency lysogenization protein HflD homolog</fullName>
    </recommendedName>
</protein>
<feature type="chain" id="PRO_1000200467" description="High frequency lysogenization protein HflD homolog">
    <location>
        <begin position="1"/>
        <end position="211"/>
    </location>
</feature>
<name>HFLD_BUCAT</name>
<keyword id="KW-1003">Cell membrane</keyword>
<keyword id="KW-0963">Cytoplasm</keyword>
<keyword id="KW-0472">Membrane</keyword>
<dbReference type="EMBL" id="CP001158">
    <property type="protein sequence ID" value="ACL30074.1"/>
    <property type="molecule type" value="Genomic_DNA"/>
</dbReference>
<dbReference type="RefSeq" id="WP_009874216.1">
    <property type="nucleotide sequence ID" value="NC_011834.1"/>
</dbReference>
<dbReference type="SMR" id="B8D7F9"/>
<dbReference type="KEGG" id="bau:BUAPTUC7_259"/>
<dbReference type="HOGENOM" id="CLU_098920_0_0_6"/>
<dbReference type="GO" id="GO:0005737">
    <property type="term" value="C:cytoplasm"/>
    <property type="evidence" value="ECO:0007669"/>
    <property type="project" value="UniProtKB-SubCell"/>
</dbReference>
<dbReference type="GO" id="GO:0005886">
    <property type="term" value="C:plasma membrane"/>
    <property type="evidence" value="ECO:0007669"/>
    <property type="project" value="UniProtKB-SubCell"/>
</dbReference>
<dbReference type="Gene3D" id="1.10.3890.10">
    <property type="entry name" value="HflD-like"/>
    <property type="match status" value="1"/>
</dbReference>
<dbReference type="HAMAP" id="MF_00695">
    <property type="entry name" value="HflD_protein"/>
    <property type="match status" value="1"/>
</dbReference>
<dbReference type="InterPro" id="IPR007451">
    <property type="entry name" value="HflD"/>
</dbReference>
<dbReference type="InterPro" id="IPR035932">
    <property type="entry name" value="HflD-like_sf"/>
</dbReference>
<dbReference type="NCBIfam" id="NF001246">
    <property type="entry name" value="PRK00218.1-2"/>
    <property type="match status" value="1"/>
</dbReference>
<dbReference type="NCBIfam" id="NF001248">
    <property type="entry name" value="PRK00218.1-4"/>
    <property type="match status" value="1"/>
</dbReference>
<dbReference type="PANTHER" id="PTHR38100">
    <property type="entry name" value="HIGH FREQUENCY LYSOGENIZATION PROTEIN HFLD"/>
    <property type="match status" value="1"/>
</dbReference>
<dbReference type="PANTHER" id="PTHR38100:SF1">
    <property type="entry name" value="HIGH FREQUENCY LYSOGENIZATION PROTEIN HFLD"/>
    <property type="match status" value="1"/>
</dbReference>
<dbReference type="Pfam" id="PF04356">
    <property type="entry name" value="DUF489"/>
    <property type="match status" value="1"/>
</dbReference>
<dbReference type="SUPFAM" id="SSF101322">
    <property type="entry name" value="YcfC-like"/>
    <property type="match status" value="1"/>
</dbReference>
<sequence length="211" mass="24303">MKKIHLITLSLAGICQSAHLVQQLAYSGKCDSNAFSICLKSILEINPTSFIAIYGNHEKNLIIGLEILLSTLTFSSFSYSYIELIKYISNMMIIEKKLKKSRTAIYSLKNKISVISSEYYLNYNIKNLTRKLGELYLEIISSLGSRIVIKGIKDFLQDHQIQEKIRCLLFSGIRAIVLWKQYGGNQLQLIYFRYFIIKKAKKILYHLKDAT</sequence>
<accession>B8D7F9</accession>
<comment type="subcellular location">
    <subcellularLocation>
        <location>Cytoplasm</location>
    </subcellularLocation>
    <subcellularLocation>
        <location evidence="1">Cell membrane</location>
        <topology evidence="1">Peripheral membrane protein</topology>
        <orientation evidence="1">Cytoplasmic side</orientation>
    </subcellularLocation>
</comment>
<comment type="similarity">
    <text evidence="1">Belongs to the HflD family.</text>
</comment>
<proteinExistence type="inferred from homology"/>
<reference key="1">
    <citation type="journal article" date="2009" name="Science">
        <title>The dynamics and time scale of ongoing genomic erosion in symbiotic bacteria.</title>
        <authorList>
            <person name="Moran N.A."/>
            <person name="McLaughlin H.J."/>
            <person name="Sorek R."/>
        </authorList>
    </citation>
    <scope>NUCLEOTIDE SEQUENCE [LARGE SCALE GENOMIC DNA]</scope>
    <source>
        <strain>Tuc7</strain>
    </source>
</reference>
<gene>
    <name evidence="1" type="primary">hflD</name>
    <name type="ordered locus">BUAPTUC7_259</name>
</gene>
<evidence type="ECO:0000255" key="1">
    <source>
        <dbReference type="HAMAP-Rule" id="MF_00695"/>
    </source>
</evidence>
<organism>
    <name type="scientific">Buchnera aphidicola subsp. Acyrthosiphon pisum (strain Tuc7)</name>
    <dbReference type="NCBI Taxonomy" id="561501"/>
    <lineage>
        <taxon>Bacteria</taxon>
        <taxon>Pseudomonadati</taxon>
        <taxon>Pseudomonadota</taxon>
        <taxon>Gammaproteobacteria</taxon>
        <taxon>Enterobacterales</taxon>
        <taxon>Erwiniaceae</taxon>
        <taxon>Buchnera</taxon>
    </lineage>
</organism>